<accession>P49622</accession>
<accession>Q27486</accession>
<dbReference type="EMBL" id="Z77131">
    <property type="protein sequence ID" value="CAB00854.1"/>
    <property type="molecule type" value="Genomic_DNA"/>
</dbReference>
<dbReference type="PIR" id="T20195">
    <property type="entry name" value="T20195"/>
</dbReference>
<dbReference type="RefSeq" id="NP_497727.1">
    <property type="nucleotide sequence ID" value="NM_065326.6"/>
</dbReference>
<dbReference type="SMR" id="P49622"/>
<dbReference type="BioGRID" id="40700">
    <property type="interactions" value="4"/>
</dbReference>
<dbReference type="FunCoup" id="P49622">
    <property type="interactions" value="725"/>
</dbReference>
<dbReference type="STRING" id="6239.C54C6.1.3"/>
<dbReference type="PaxDb" id="6239-C54C6.1.2"/>
<dbReference type="PeptideAtlas" id="P49622"/>
<dbReference type="EnsemblMetazoa" id="C54C6.1.1">
    <property type="protein sequence ID" value="C54C6.1.1"/>
    <property type="gene ID" value="WBGene00004451"/>
</dbReference>
<dbReference type="GeneID" id="175460"/>
<dbReference type="KEGG" id="cel:CELE_C54C6.1"/>
<dbReference type="UCSC" id="C54C6.1.2">
    <property type="organism name" value="c. elegans"/>
</dbReference>
<dbReference type="AGR" id="WB:WBGene00004451"/>
<dbReference type="CTD" id="175460"/>
<dbReference type="WormBase" id="C54C6.1">
    <property type="protein sequence ID" value="CE05493"/>
    <property type="gene ID" value="WBGene00004451"/>
    <property type="gene designation" value="rpl-37.2"/>
</dbReference>
<dbReference type="eggNOG" id="KOG3475">
    <property type="taxonomic scope" value="Eukaryota"/>
</dbReference>
<dbReference type="GeneTree" id="ENSGT00940000168926"/>
<dbReference type="HOGENOM" id="CLU_150908_0_0_1"/>
<dbReference type="InParanoid" id="P49622"/>
<dbReference type="OMA" id="NGFRENI"/>
<dbReference type="OrthoDB" id="10259236at2759"/>
<dbReference type="PhylomeDB" id="P49622"/>
<dbReference type="PRO" id="PR:P49622"/>
<dbReference type="Proteomes" id="UP000001940">
    <property type="component" value="Chromosome III"/>
</dbReference>
<dbReference type="Bgee" id="WBGene00004451">
    <property type="expression patterns" value="Expressed in adult organism and 3 other cell types or tissues"/>
</dbReference>
<dbReference type="GO" id="GO:0022625">
    <property type="term" value="C:cytosolic large ribosomal subunit"/>
    <property type="evidence" value="ECO:0000318"/>
    <property type="project" value="GO_Central"/>
</dbReference>
<dbReference type="GO" id="GO:0003723">
    <property type="term" value="F:RNA binding"/>
    <property type="evidence" value="ECO:0000318"/>
    <property type="project" value="GO_Central"/>
</dbReference>
<dbReference type="GO" id="GO:0019843">
    <property type="term" value="F:rRNA binding"/>
    <property type="evidence" value="ECO:0007669"/>
    <property type="project" value="UniProtKB-KW"/>
</dbReference>
<dbReference type="GO" id="GO:0003735">
    <property type="term" value="F:structural constituent of ribosome"/>
    <property type="evidence" value="ECO:0007669"/>
    <property type="project" value="InterPro"/>
</dbReference>
<dbReference type="GO" id="GO:0008270">
    <property type="term" value="F:zinc ion binding"/>
    <property type="evidence" value="ECO:0007669"/>
    <property type="project" value="UniProtKB-KW"/>
</dbReference>
<dbReference type="GO" id="GO:0006412">
    <property type="term" value="P:translation"/>
    <property type="evidence" value="ECO:0007669"/>
    <property type="project" value="InterPro"/>
</dbReference>
<dbReference type="FunFam" id="2.20.25.30:FF:000001">
    <property type="entry name" value="Ribosomal protein L37"/>
    <property type="match status" value="1"/>
</dbReference>
<dbReference type="Gene3D" id="2.20.25.30">
    <property type="match status" value="1"/>
</dbReference>
<dbReference type="InterPro" id="IPR001569">
    <property type="entry name" value="Ribosomal_eL37"/>
</dbReference>
<dbReference type="InterPro" id="IPR011331">
    <property type="entry name" value="Ribosomal_eL37/eL43"/>
</dbReference>
<dbReference type="InterPro" id="IPR018267">
    <property type="entry name" value="Ribosomal_eL37_CS"/>
</dbReference>
<dbReference type="InterPro" id="IPR011332">
    <property type="entry name" value="Ribosomal_zn-bd"/>
</dbReference>
<dbReference type="PANTHER" id="PTHR10768">
    <property type="entry name" value="60S RIBOSOMAL PROTEIN L37"/>
    <property type="match status" value="1"/>
</dbReference>
<dbReference type="PANTHER" id="PTHR10768:SF0">
    <property type="entry name" value="RIBOSOMAL PROTEIN L37"/>
    <property type="match status" value="1"/>
</dbReference>
<dbReference type="Pfam" id="PF01907">
    <property type="entry name" value="Ribosomal_L37e"/>
    <property type="match status" value="1"/>
</dbReference>
<dbReference type="SUPFAM" id="SSF57829">
    <property type="entry name" value="Zn-binding ribosomal proteins"/>
    <property type="match status" value="1"/>
</dbReference>
<dbReference type="PROSITE" id="PS01077">
    <property type="entry name" value="RIBOSOMAL_L37E"/>
    <property type="match status" value="1"/>
</dbReference>
<evidence type="ECO:0000250" key="1"/>
<evidence type="ECO:0000255" key="2"/>
<evidence type="ECO:0000305" key="3"/>
<evidence type="ECO:0000312" key="4">
    <source>
        <dbReference type="WormBase" id="C54C6.1"/>
    </source>
</evidence>
<sequence length="91" mass="10409">MTKGTQAFGKKHVKSHTLCKRCGKSSFHIQKKRCASCGYQDAKKRTYNWGAKSIRRRTTGTGRTRHLRDVNARFRNGFRGTTPKPRAQPTN</sequence>
<proteinExistence type="inferred from homology"/>
<gene>
    <name evidence="4" type="primary">rpl-37.2</name>
    <name type="ORF">C54C6.1</name>
</gene>
<protein>
    <recommendedName>
        <fullName evidence="3">Large ribosomal subunit protein eL37</fullName>
    </recommendedName>
    <alternativeName>
        <fullName>60S ribosomal protein L37</fullName>
    </alternativeName>
</protein>
<reference key="1">
    <citation type="journal article" date="1998" name="Science">
        <title>Genome sequence of the nematode C. elegans: a platform for investigating biology.</title>
        <authorList>
            <consortium name="The C. elegans sequencing consortium"/>
        </authorList>
    </citation>
    <scope>NUCLEOTIDE SEQUENCE [LARGE SCALE GENOMIC DNA]</scope>
    <source>
        <strain>Bristol N2</strain>
    </source>
</reference>
<name>RL37_CAEEL</name>
<feature type="chain" id="PRO_0000139709" description="Large ribosomal subunit protein eL37">
    <location>
        <begin position="1"/>
        <end position="91"/>
    </location>
</feature>
<feature type="zinc finger region" description="C4-type" evidence="2">
    <location>
        <begin position="19"/>
        <end position="37"/>
    </location>
</feature>
<feature type="binding site" evidence="1">
    <location>
        <position position="19"/>
    </location>
    <ligand>
        <name>Zn(2+)</name>
        <dbReference type="ChEBI" id="CHEBI:29105"/>
    </ligand>
</feature>
<feature type="binding site" evidence="1">
    <location>
        <position position="22"/>
    </location>
    <ligand>
        <name>Zn(2+)</name>
        <dbReference type="ChEBI" id="CHEBI:29105"/>
    </ligand>
</feature>
<feature type="binding site" evidence="1">
    <location>
        <position position="34"/>
    </location>
    <ligand>
        <name>Zn(2+)</name>
        <dbReference type="ChEBI" id="CHEBI:29105"/>
    </ligand>
</feature>
<feature type="binding site" evidence="1">
    <location>
        <position position="37"/>
    </location>
    <ligand>
        <name>Zn(2+)</name>
        <dbReference type="ChEBI" id="CHEBI:29105"/>
    </ligand>
</feature>
<comment type="function">
    <text evidence="1">Binds to the 23S rRNA.</text>
</comment>
<comment type="cofactor">
    <cofactor evidence="1">
        <name>Zn(2+)</name>
        <dbReference type="ChEBI" id="CHEBI:29105"/>
    </cofactor>
    <text evidence="1">Binds 1 zinc ion per subunit.</text>
</comment>
<comment type="similarity">
    <text evidence="3">Belongs to the eukaryotic ribosomal protein eL37 family.</text>
</comment>
<organism>
    <name type="scientific">Caenorhabditis elegans</name>
    <dbReference type="NCBI Taxonomy" id="6239"/>
    <lineage>
        <taxon>Eukaryota</taxon>
        <taxon>Metazoa</taxon>
        <taxon>Ecdysozoa</taxon>
        <taxon>Nematoda</taxon>
        <taxon>Chromadorea</taxon>
        <taxon>Rhabditida</taxon>
        <taxon>Rhabditina</taxon>
        <taxon>Rhabditomorpha</taxon>
        <taxon>Rhabditoidea</taxon>
        <taxon>Rhabditidae</taxon>
        <taxon>Peloderinae</taxon>
        <taxon>Caenorhabditis</taxon>
    </lineage>
</organism>
<keyword id="KW-0479">Metal-binding</keyword>
<keyword id="KW-1185">Reference proteome</keyword>
<keyword id="KW-0687">Ribonucleoprotein</keyword>
<keyword id="KW-0689">Ribosomal protein</keyword>
<keyword id="KW-0694">RNA-binding</keyword>
<keyword id="KW-0699">rRNA-binding</keyword>
<keyword id="KW-0862">Zinc</keyword>
<keyword id="KW-0863">Zinc-finger</keyword>